<protein>
    <recommendedName>
        <fullName evidence="1">SsrA-binding protein</fullName>
    </recommendedName>
    <alternativeName>
        <fullName evidence="1">Small protein B</fullName>
    </alternativeName>
</protein>
<keyword id="KW-0963">Cytoplasm</keyword>
<keyword id="KW-0694">RNA-binding</keyword>
<dbReference type="EMBL" id="CP001359">
    <property type="protein sequence ID" value="ACL67145.1"/>
    <property type="molecule type" value="Genomic_DNA"/>
</dbReference>
<dbReference type="RefSeq" id="WP_012527713.1">
    <property type="nucleotide sequence ID" value="NC_011891.1"/>
</dbReference>
<dbReference type="SMR" id="B8J7G5"/>
<dbReference type="KEGG" id="acp:A2cp1_3821"/>
<dbReference type="HOGENOM" id="CLU_108953_0_1_7"/>
<dbReference type="Proteomes" id="UP000007089">
    <property type="component" value="Chromosome"/>
</dbReference>
<dbReference type="GO" id="GO:0005829">
    <property type="term" value="C:cytosol"/>
    <property type="evidence" value="ECO:0007669"/>
    <property type="project" value="TreeGrafter"/>
</dbReference>
<dbReference type="GO" id="GO:0003723">
    <property type="term" value="F:RNA binding"/>
    <property type="evidence" value="ECO:0007669"/>
    <property type="project" value="UniProtKB-UniRule"/>
</dbReference>
<dbReference type="GO" id="GO:0070929">
    <property type="term" value="P:trans-translation"/>
    <property type="evidence" value="ECO:0007669"/>
    <property type="project" value="UniProtKB-UniRule"/>
</dbReference>
<dbReference type="CDD" id="cd09294">
    <property type="entry name" value="SmpB"/>
    <property type="match status" value="1"/>
</dbReference>
<dbReference type="Gene3D" id="2.40.280.10">
    <property type="match status" value="1"/>
</dbReference>
<dbReference type="HAMAP" id="MF_00023">
    <property type="entry name" value="SmpB"/>
    <property type="match status" value="1"/>
</dbReference>
<dbReference type="InterPro" id="IPR023620">
    <property type="entry name" value="SmpB"/>
</dbReference>
<dbReference type="InterPro" id="IPR000037">
    <property type="entry name" value="SsrA-bd_prot"/>
</dbReference>
<dbReference type="InterPro" id="IPR020081">
    <property type="entry name" value="SsrA-bd_prot_CS"/>
</dbReference>
<dbReference type="NCBIfam" id="NF003843">
    <property type="entry name" value="PRK05422.1"/>
    <property type="match status" value="1"/>
</dbReference>
<dbReference type="NCBIfam" id="TIGR00086">
    <property type="entry name" value="smpB"/>
    <property type="match status" value="1"/>
</dbReference>
<dbReference type="PANTHER" id="PTHR30308:SF2">
    <property type="entry name" value="SSRA-BINDING PROTEIN"/>
    <property type="match status" value="1"/>
</dbReference>
<dbReference type="PANTHER" id="PTHR30308">
    <property type="entry name" value="TMRNA-BINDING COMPONENT OF TRANS-TRANSLATION TAGGING COMPLEX"/>
    <property type="match status" value="1"/>
</dbReference>
<dbReference type="Pfam" id="PF01668">
    <property type="entry name" value="SmpB"/>
    <property type="match status" value="1"/>
</dbReference>
<dbReference type="SUPFAM" id="SSF74982">
    <property type="entry name" value="Small protein B (SmpB)"/>
    <property type="match status" value="1"/>
</dbReference>
<dbReference type="PROSITE" id="PS01317">
    <property type="entry name" value="SSRP"/>
    <property type="match status" value="1"/>
</dbReference>
<comment type="function">
    <text evidence="1">Required for rescue of stalled ribosomes mediated by trans-translation. Binds to transfer-messenger RNA (tmRNA), required for stable association of tmRNA with ribosomes. tmRNA and SmpB together mimic tRNA shape, replacing the anticodon stem-loop with SmpB. tmRNA is encoded by the ssrA gene; the 2 termini fold to resemble tRNA(Ala) and it encodes a 'tag peptide', a short internal open reading frame. During trans-translation Ala-aminoacylated tmRNA acts like a tRNA, entering the A-site of stalled ribosomes, displacing the stalled mRNA. The ribosome then switches to translate the ORF on the tmRNA; the nascent peptide is terminated with the 'tag peptide' encoded by the tmRNA and targeted for degradation. The ribosome is freed to recommence translation, which seems to be the essential function of trans-translation.</text>
</comment>
<comment type="subcellular location">
    <subcellularLocation>
        <location evidence="1">Cytoplasm</location>
    </subcellularLocation>
    <text evidence="1">The tmRNA-SmpB complex associates with stalled 70S ribosomes.</text>
</comment>
<comment type="similarity">
    <text evidence="1">Belongs to the SmpB family.</text>
</comment>
<organism>
    <name type="scientific">Anaeromyxobacter dehalogenans (strain 2CP-1 / ATCC BAA-258)</name>
    <dbReference type="NCBI Taxonomy" id="455488"/>
    <lineage>
        <taxon>Bacteria</taxon>
        <taxon>Pseudomonadati</taxon>
        <taxon>Myxococcota</taxon>
        <taxon>Myxococcia</taxon>
        <taxon>Myxococcales</taxon>
        <taxon>Cystobacterineae</taxon>
        <taxon>Anaeromyxobacteraceae</taxon>
        <taxon>Anaeromyxobacter</taxon>
    </lineage>
</organism>
<gene>
    <name evidence="1" type="primary">smpB</name>
    <name type="ordered locus">A2cp1_3821</name>
</gene>
<reference key="1">
    <citation type="submission" date="2009-01" db="EMBL/GenBank/DDBJ databases">
        <title>Complete sequence of Anaeromyxobacter dehalogenans 2CP-1.</title>
        <authorList>
            <person name="Lucas S."/>
            <person name="Copeland A."/>
            <person name="Lapidus A."/>
            <person name="Glavina del Rio T."/>
            <person name="Dalin E."/>
            <person name="Tice H."/>
            <person name="Bruce D."/>
            <person name="Goodwin L."/>
            <person name="Pitluck S."/>
            <person name="Saunders E."/>
            <person name="Brettin T."/>
            <person name="Detter J.C."/>
            <person name="Han C."/>
            <person name="Larimer F."/>
            <person name="Land M."/>
            <person name="Hauser L."/>
            <person name="Kyrpides N."/>
            <person name="Ovchinnikova G."/>
            <person name="Beliaev A.S."/>
            <person name="Richardson P."/>
        </authorList>
    </citation>
    <scope>NUCLEOTIDE SEQUENCE [LARGE SCALE GENOMIC DNA]</scope>
    <source>
        <strain>2CP-1 / ATCC BAA-258</strain>
    </source>
</reference>
<sequence>MKGKAGGKAADAAEKVAASNRRARFDYDVEDTWEAGLVLTGSEVKSLREGNVNLSDAYAMPRGEELWLLNCRIGEYQQAAHFGHAPLRDRKLLMNRAEIDRVRGKVEQRGYTLVPLRIYFKQGWAKVELGLARGRSHEDRRGAIAERESKREMDRALARGRRR</sequence>
<name>SSRP_ANAD2</name>
<accession>B8J7G5</accession>
<feature type="chain" id="PRO_1000197601" description="SsrA-binding protein">
    <location>
        <begin position="1"/>
        <end position="163"/>
    </location>
</feature>
<feature type="region of interest" description="Disordered" evidence="2">
    <location>
        <begin position="138"/>
        <end position="163"/>
    </location>
</feature>
<feature type="compositionally biased region" description="Basic and acidic residues" evidence="2">
    <location>
        <begin position="138"/>
        <end position="157"/>
    </location>
</feature>
<proteinExistence type="inferred from homology"/>
<evidence type="ECO:0000255" key="1">
    <source>
        <dbReference type="HAMAP-Rule" id="MF_00023"/>
    </source>
</evidence>
<evidence type="ECO:0000256" key="2">
    <source>
        <dbReference type="SAM" id="MobiDB-lite"/>
    </source>
</evidence>